<dbReference type="EC" id="6.1.1.7" evidence="1"/>
<dbReference type="EMBL" id="CP000261">
    <property type="protein sequence ID" value="ABF36250.1"/>
    <property type="molecule type" value="Genomic_DNA"/>
</dbReference>
<dbReference type="SMR" id="Q1JB08"/>
<dbReference type="KEGG" id="spj:MGAS2096_Spy1198"/>
<dbReference type="HOGENOM" id="CLU_004485_1_1_9"/>
<dbReference type="GO" id="GO:0005829">
    <property type="term" value="C:cytosol"/>
    <property type="evidence" value="ECO:0007669"/>
    <property type="project" value="TreeGrafter"/>
</dbReference>
<dbReference type="GO" id="GO:0004813">
    <property type="term" value="F:alanine-tRNA ligase activity"/>
    <property type="evidence" value="ECO:0007669"/>
    <property type="project" value="UniProtKB-UniRule"/>
</dbReference>
<dbReference type="GO" id="GO:0002161">
    <property type="term" value="F:aminoacyl-tRNA deacylase activity"/>
    <property type="evidence" value="ECO:0007669"/>
    <property type="project" value="TreeGrafter"/>
</dbReference>
<dbReference type="GO" id="GO:0005524">
    <property type="term" value="F:ATP binding"/>
    <property type="evidence" value="ECO:0007669"/>
    <property type="project" value="UniProtKB-UniRule"/>
</dbReference>
<dbReference type="GO" id="GO:0140096">
    <property type="term" value="F:catalytic activity, acting on a protein"/>
    <property type="evidence" value="ECO:0007669"/>
    <property type="project" value="UniProtKB-ARBA"/>
</dbReference>
<dbReference type="GO" id="GO:0016740">
    <property type="term" value="F:transferase activity"/>
    <property type="evidence" value="ECO:0007669"/>
    <property type="project" value="UniProtKB-ARBA"/>
</dbReference>
<dbReference type="GO" id="GO:0000049">
    <property type="term" value="F:tRNA binding"/>
    <property type="evidence" value="ECO:0007669"/>
    <property type="project" value="UniProtKB-KW"/>
</dbReference>
<dbReference type="GO" id="GO:0008270">
    <property type="term" value="F:zinc ion binding"/>
    <property type="evidence" value="ECO:0007669"/>
    <property type="project" value="UniProtKB-UniRule"/>
</dbReference>
<dbReference type="GO" id="GO:0006419">
    <property type="term" value="P:alanyl-tRNA aminoacylation"/>
    <property type="evidence" value="ECO:0007669"/>
    <property type="project" value="UniProtKB-UniRule"/>
</dbReference>
<dbReference type="CDD" id="cd00673">
    <property type="entry name" value="AlaRS_core"/>
    <property type="match status" value="1"/>
</dbReference>
<dbReference type="FunFam" id="3.10.310.40:FF:000001">
    <property type="entry name" value="Alanine--tRNA ligase"/>
    <property type="match status" value="1"/>
</dbReference>
<dbReference type="FunFam" id="3.30.54.20:FF:000001">
    <property type="entry name" value="Alanine--tRNA ligase"/>
    <property type="match status" value="1"/>
</dbReference>
<dbReference type="FunFam" id="3.30.930.10:FF:000046">
    <property type="entry name" value="Alanine--tRNA ligase"/>
    <property type="match status" value="1"/>
</dbReference>
<dbReference type="FunFam" id="3.30.980.10:FF:000004">
    <property type="entry name" value="Alanine--tRNA ligase, cytoplasmic"/>
    <property type="match status" value="1"/>
</dbReference>
<dbReference type="Gene3D" id="2.40.30.130">
    <property type="match status" value="1"/>
</dbReference>
<dbReference type="Gene3D" id="3.10.310.40">
    <property type="match status" value="1"/>
</dbReference>
<dbReference type="Gene3D" id="3.30.54.20">
    <property type="match status" value="1"/>
</dbReference>
<dbReference type="Gene3D" id="6.10.250.550">
    <property type="match status" value="1"/>
</dbReference>
<dbReference type="Gene3D" id="3.30.930.10">
    <property type="entry name" value="Bira Bifunctional Protein, Domain 2"/>
    <property type="match status" value="1"/>
</dbReference>
<dbReference type="Gene3D" id="3.30.980.10">
    <property type="entry name" value="Threonyl-trna Synthetase, Chain A, domain 2"/>
    <property type="match status" value="1"/>
</dbReference>
<dbReference type="HAMAP" id="MF_00036_B">
    <property type="entry name" value="Ala_tRNA_synth_B"/>
    <property type="match status" value="1"/>
</dbReference>
<dbReference type="InterPro" id="IPR045864">
    <property type="entry name" value="aa-tRNA-synth_II/BPL/LPL"/>
</dbReference>
<dbReference type="InterPro" id="IPR002318">
    <property type="entry name" value="Ala-tRNA-lgiase_IIc"/>
</dbReference>
<dbReference type="InterPro" id="IPR018162">
    <property type="entry name" value="Ala-tRNA-ligase_IIc_anticod-bd"/>
</dbReference>
<dbReference type="InterPro" id="IPR018165">
    <property type="entry name" value="Ala-tRNA-synth_IIc_core"/>
</dbReference>
<dbReference type="InterPro" id="IPR018164">
    <property type="entry name" value="Ala-tRNA-synth_IIc_N"/>
</dbReference>
<dbReference type="InterPro" id="IPR050058">
    <property type="entry name" value="Ala-tRNA_ligase"/>
</dbReference>
<dbReference type="InterPro" id="IPR023033">
    <property type="entry name" value="Ala_tRNA_ligase_euk/bac"/>
</dbReference>
<dbReference type="InterPro" id="IPR003156">
    <property type="entry name" value="DHHA1_dom"/>
</dbReference>
<dbReference type="InterPro" id="IPR018163">
    <property type="entry name" value="Thr/Ala-tRNA-synth_IIc_edit"/>
</dbReference>
<dbReference type="InterPro" id="IPR009000">
    <property type="entry name" value="Transl_B-barrel_sf"/>
</dbReference>
<dbReference type="InterPro" id="IPR012947">
    <property type="entry name" value="tRNA_SAD"/>
</dbReference>
<dbReference type="NCBIfam" id="TIGR00344">
    <property type="entry name" value="alaS"/>
    <property type="match status" value="1"/>
</dbReference>
<dbReference type="PANTHER" id="PTHR11777:SF9">
    <property type="entry name" value="ALANINE--TRNA LIGASE, CYTOPLASMIC"/>
    <property type="match status" value="1"/>
</dbReference>
<dbReference type="PANTHER" id="PTHR11777">
    <property type="entry name" value="ALANYL-TRNA SYNTHETASE"/>
    <property type="match status" value="1"/>
</dbReference>
<dbReference type="Pfam" id="PF02272">
    <property type="entry name" value="DHHA1"/>
    <property type="match status" value="1"/>
</dbReference>
<dbReference type="Pfam" id="PF01411">
    <property type="entry name" value="tRNA-synt_2c"/>
    <property type="match status" value="1"/>
</dbReference>
<dbReference type="Pfam" id="PF07973">
    <property type="entry name" value="tRNA_SAD"/>
    <property type="match status" value="1"/>
</dbReference>
<dbReference type="PRINTS" id="PR00980">
    <property type="entry name" value="TRNASYNTHALA"/>
</dbReference>
<dbReference type="SMART" id="SM00863">
    <property type="entry name" value="tRNA_SAD"/>
    <property type="match status" value="1"/>
</dbReference>
<dbReference type="SUPFAM" id="SSF55681">
    <property type="entry name" value="Class II aaRS and biotin synthetases"/>
    <property type="match status" value="1"/>
</dbReference>
<dbReference type="SUPFAM" id="SSF101353">
    <property type="entry name" value="Putative anticodon-binding domain of alanyl-tRNA synthetase (AlaRS)"/>
    <property type="match status" value="1"/>
</dbReference>
<dbReference type="SUPFAM" id="SSF55186">
    <property type="entry name" value="ThrRS/AlaRS common domain"/>
    <property type="match status" value="1"/>
</dbReference>
<dbReference type="SUPFAM" id="SSF50447">
    <property type="entry name" value="Translation proteins"/>
    <property type="match status" value="1"/>
</dbReference>
<dbReference type="PROSITE" id="PS50860">
    <property type="entry name" value="AA_TRNA_LIGASE_II_ALA"/>
    <property type="match status" value="1"/>
</dbReference>
<sequence length="872" mass="96499">MKELSSAQIRQMWLDFWKSKGHCVEPSANLVPVNDPTLLWINSGVATLKKYFDGSVIPENPRITNAQKSIRTNDIENVGKTARHHTMFEMLGNFSIGDYFRDEAIEWGFELLTSPDWFDFPKDKLYMTYYPDDKDSYNRWIACGVEPSHLVPIEDNFWEIGAGPSGPDTEIFFDRGEDFDPENIGLRLLAEDIENDRYIEIWNIVLSQFNADPAVPRSEYKELPNKNIDTGAGLERLAAVMQGAKTNFETDLFMPIIREVEKLSGKTYNPDGDNMSFKVIADHIRALSFAIGDGALPGNEGRGYVLRRLLRRAVMHGRRLGINETFLYKLVPTVGQIMESYYPEVLEKHDFIEKIVKREEETFARTIDAGSGHLDSLLAQLKAEGKDTLEGKDIFKLYDTYGFPVELTEELAEDAGYKIDHEGFKSAMKEQQDRARAAVVKGGSMGMQNETLAGIVEESRFEYDTYSLESSLSVIIADNERTEAVSEGQALLVFAQTPFYAEMGGQVADTGRIKNDKGDTVAEVVDVQKAPNGQPLHTVNVLASLSVGTNYTLEINKERRLAVEKNHTATHLLHAALHNVIGEHATQAGSLNEEEFLRFDFTHFEAVSNEELRHIEQEVNEQIWNALTITTTETDVETAKEMGAMALFGEKYGKVVRVVQIGNYSVELCGGTHLNNSSEIGLFKIVKEEGIGSGTRRIIAVTGRQAFEAYRNQEDALKEIAATVKAPQLKDAAAKVQALSDSLRDLQKENAELKEKAAAAAAGDVFKDVQEAKGVRFIASQVDVADAGALRTFADNWKQKDYSDVLVLVAAIGEKVNVLVASKTKDVHAGNMIKELAPIVAGRGGGKPDMAMAGGSDASKIAELLAAVAETV</sequence>
<feature type="chain" id="PRO_0000347822" description="Alanine--tRNA ligase">
    <location>
        <begin position="1"/>
        <end position="872"/>
    </location>
</feature>
<feature type="binding site" evidence="1">
    <location>
        <position position="567"/>
    </location>
    <ligand>
        <name>Zn(2+)</name>
        <dbReference type="ChEBI" id="CHEBI:29105"/>
    </ligand>
</feature>
<feature type="binding site" evidence="1">
    <location>
        <position position="571"/>
    </location>
    <ligand>
        <name>Zn(2+)</name>
        <dbReference type="ChEBI" id="CHEBI:29105"/>
    </ligand>
</feature>
<feature type="binding site" evidence="1">
    <location>
        <position position="669"/>
    </location>
    <ligand>
        <name>Zn(2+)</name>
        <dbReference type="ChEBI" id="CHEBI:29105"/>
    </ligand>
</feature>
<feature type="binding site" evidence="1">
    <location>
        <position position="673"/>
    </location>
    <ligand>
        <name>Zn(2+)</name>
        <dbReference type="ChEBI" id="CHEBI:29105"/>
    </ligand>
</feature>
<keyword id="KW-0030">Aminoacyl-tRNA synthetase</keyword>
<keyword id="KW-0067">ATP-binding</keyword>
<keyword id="KW-0963">Cytoplasm</keyword>
<keyword id="KW-0436">Ligase</keyword>
<keyword id="KW-0479">Metal-binding</keyword>
<keyword id="KW-0547">Nucleotide-binding</keyword>
<keyword id="KW-0648">Protein biosynthesis</keyword>
<keyword id="KW-0694">RNA-binding</keyword>
<keyword id="KW-0820">tRNA-binding</keyword>
<keyword id="KW-0862">Zinc</keyword>
<name>SYA_STRPB</name>
<evidence type="ECO:0000255" key="1">
    <source>
        <dbReference type="HAMAP-Rule" id="MF_00036"/>
    </source>
</evidence>
<proteinExistence type="inferred from homology"/>
<organism>
    <name type="scientific">Streptococcus pyogenes serotype M12 (strain MGAS2096)</name>
    <dbReference type="NCBI Taxonomy" id="370553"/>
    <lineage>
        <taxon>Bacteria</taxon>
        <taxon>Bacillati</taxon>
        <taxon>Bacillota</taxon>
        <taxon>Bacilli</taxon>
        <taxon>Lactobacillales</taxon>
        <taxon>Streptococcaceae</taxon>
        <taxon>Streptococcus</taxon>
    </lineage>
</organism>
<reference key="1">
    <citation type="journal article" date="2006" name="Proc. Natl. Acad. Sci. U.S.A.">
        <title>Molecular genetic anatomy of inter- and intraserotype variation in the human bacterial pathogen group A Streptococcus.</title>
        <authorList>
            <person name="Beres S.B."/>
            <person name="Richter E.W."/>
            <person name="Nagiec M.J."/>
            <person name="Sumby P."/>
            <person name="Porcella S.F."/>
            <person name="DeLeo F.R."/>
            <person name="Musser J.M."/>
        </authorList>
    </citation>
    <scope>NUCLEOTIDE SEQUENCE [LARGE SCALE GENOMIC DNA]</scope>
    <source>
        <strain>MGAS2096</strain>
    </source>
</reference>
<comment type="function">
    <text evidence="1">Catalyzes the attachment of alanine to tRNA(Ala) in a two-step reaction: alanine is first activated by ATP to form Ala-AMP and then transferred to the acceptor end of tRNA(Ala). Also edits incorrectly charged Ser-tRNA(Ala) and Gly-tRNA(Ala) via its editing domain.</text>
</comment>
<comment type="catalytic activity">
    <reaction evidence="1">
        <text>tRNA(Ala) + L-alanine + ATP = L-alanyl-tRNA(Ala) + AMP + diphosphate</text>
        <dbReference type="Rhea" id="RHEA:12540"/>
        <dbReference type="Rhea" id="RHEA-COMP:9657"/>
        <dbReference type="Rhea" id="RHEA-COMP:9923"/>
        <dbReference type="ChEBI" id="CHEBI:30616"/>
        <dbReference type="ChEBI" id="CHEBI:33019"/>
        <dbReference type="ChEBI" id="CHEBI:57972"/>
        <dbReference type="ChEBI" id="CHEBI:78442"/>
        <dbReference type="ChEBI" id="CHEBI:78497"/>
        <dbReference type="ChEBI" id="CHEBI:456215"/>
        <dbReference type="EC" id="6.1.1.7"/>
    </reaction>
</comment>
<comment type="cofactor">
    <cofactor evidence="1">
        <name>Zn(2+)</name>
        <dbReference type="ChEBI" id="CHEBI:29105"/>
    </cofactor>
    <text evidence="1">Binds 1 zinc ion per subunit.</text>
</comment>
<comment type="subcellular location">
    <subcellularLocation>
        <location evidence="1">Cytoplasm</location>
    </subcellularLocation>
</comment>
<comment type="domain">
    <text evidence="1">Consists of three domains; the N-terminal catalytic domain, the editing domain and the C-terminal C-Ala domain. The editing domain removes incorrectly charged amino acids, while the C-Ala domain, along with tRNA(Ala), serves as a bridge to cooperatively bring together the editing and aminoacylation centers thus stimulating deacylation of misacylated tRNAs.</text>
</comment>
<comment type="similarity">
    <text evidence="1">Belongs to the class-II aminoacyl-tRNA synthetase family.</text>
</comment>
<accession>Q1JB08</accession>
<protein>
    <recommendedName>
        <fullName evidence="1">Alanine--tRNA ligase</fullName>
        <ecNumber evidence="1">6.1.1.7</ecNumber>
    </recommendedName>
    <alternativeName>
        <fullName evidence="1">Alanyl-tRNA synthetase</fullName>
        <shortName evidence="1">AlaRS</shortName>
    </alternativeName>
</protein>
<gene>
    <name evidence="1" type="primary">alaS</name>
    <name type="ordered locus">MGAS2096_Spy1198</name>
</gene>